<organism>
    <name type="scientific">Saccharomyces cerevisiae (strain YJM789)</name>
    <name type="common">Baker's yeast</name>
    <dbReference type="NCBI Taxonomy" id="307796"/>
    <lineage>
        <taxon>Eukaryota</taxon>
        <taxon>Fungi</taxon>
        <taxon>Dikarya</taxon>
        <taxon>Ascomycota</taxon>
        <taxon>Saccharomycotina</taxon>
        <taxon>Saccharomycetes</taxon>
        <taxon>Saccharomycetales</taxon>
        <taxon>Saccharomycetaceae</taxon>
        <taxon>Saccharomyces</taxon>
    </lineage>
</organism>
<name>YIM1_YEAS7</name>
<keyword id="KW-0551">Lipid droplet</keyword>
<keyword id="KW-0496">Mitochondrion</keyword>
<accession>A6ZML0</accession>
<evidence type="ECO:0000250" key="1"/>
<evidence type="ECO:0000305" key="2"/>
<comment type="subcellular location">
    <subcellularLocation>
        <location evidence="1">Lipid droplet</location>
    </subcellularLocation>
    <subcellularLocation>
        <location evidence="1">Mitochondrion</location>
    </subcellularLocation>
</comment>
<comment type="similarity">
    <text evidence="2">Belongs to the YIM1 family.</text>
</comment>
<reference key="1">
    <citation type="journal article" date="2007" name="Proc. Natl. Acad. Sci. U.S.A.">
        <title>Genome sequencing and comparative analysis of Saccharomyces cerevisiae strain YJM789.</title>
        <authorList>
            <person name="Wei W."/>
            <person name="McCusker J.H."/>
            <person name="Hyman R.W."/>
            <person name="Jones T."/>
            <person name="Ning Y."/>
            <person name="Cao Z."/>
            <person name="Gu Z."/>
            <person name="Bruno D."/>
            <person name="Miranda M."/>
            <person name="Nguyen M."/>
            <person name="Wilhelmy J."/>
            <person name="Komp C."/>
            <person name="Tamse R."/>
            <person name="Wang X."/>
            <person name="Jia P."/>
            <person name="Luedi P."/>
            <person name="Oefner P.J."/>
            <person name="David L."/>
            <person name="Dietrich F.S."/>
            <person name="Li Y."/>
            <person name="Davis R.W."/>
            <person name="Steinmetz L.M."/>
        </authorList>
    </citation>
    <scope>NUCLEOTIDE SEQUENCE [LARGE SCALE GENOMIC DNA]</scope>
    <source>
        <strain>YJM789</strain>
    </source>
</reference>
<protein>
    <recommendedName>
        <fullName>Protein YIM1</fullName>
    </recommendedName>
</protein>
<gene>
    <name type="primary">YIM1</name>
    <name type="ORF">SCY_4326</name>
</gene>
<dbReference type="EMBL" id="AAFW02000021">
    <property type="protein sequence ID" value="EDN64084.1"/>
    <property type="molecule type" value="Genomic_DNA"/>
</dbReference>
<dbReference type="SMR" id="A6ZML0"/>
<dbReference type="HOGENOM" id="CLU_026673_3_3_1"/>
<dbReference type="OrthoDB" id="39914at4893"/>
<dbReference type="Proteomes" id="UP000007060">
    <property type="component" value="Unassembled WGS sequence"/>
</dbReference>
<dbReference type="GO" id="GO:0005811">
    <property type="term" value="C:lipid droplet"/>
    <property type="evidence" value="ECO:0007669"/>
    <property type="project" value="UniProtKB-SubCell"/>
</dbReference>
<dbReference type="GO" id="GO:0005739">
    <property type="term" value="C:mitochondrion"/>
    <property type="evidence" value="ECO:0007669"/>
    <property type="project" value="UniProtKB-SubCell"/>
</dbReference>
<dbReference type="CDD" id="cd08247">
    <property type="entry name" value="AST1_like"/>
    <property type="match status" value="1"/>
</dbReference>
<dbReference type="Gene3D" id="3.90.180.10">
    <property type="entry name" value="Medium-chain alcohol dehydrogenases, catalytic domain"/>
    <property type="match status" value="1"/>
</dbReference>
<dbReference type="Gene3D" id="3.40.50.720">
    <property type="entry name" value="NAD(P)-binding Rossmann-like Domain"/>
    <property type="match status" value="1"/>
</dbReference>
<dbReference type="InterPro" id="IPR013154">
    <property type="entry name" value="ADH-like_N"/>
</dbReference>
<dbReference type="InterPro" id="IPR011032">
    <property type="entry name" value="GroES-like_sf"/>
</dbReference>
<dbReference type="InterPro" id="IPR036291">
    <property type="entry name" value="NAD(P)-bd_dom_sf"/>
</dbReference>
<dbReference type="InterPro" id="IPR050700">
    <property type="entry name" value="YIM1/Zinc_Alcohol_DH_Fams"/>
</dbReference>
<dbReference type="PANTHER" id="PTHR11695">
    <property type="entry name" value="ALCOHOL DEHYDROGENASE RELATED"/>
    <property type="match status" value="1"/>
</dbReference>
<dbReference type="PANTHER" id="PTHR11695:SF294">
    <property type="entry name" value="RETICULON-4-INTERACTING PROTEIN 1, MITOCHONDRIAL"/>
    <property type="match status" value="1"/>
</dbReference>
<dbReference type="Pfam" id="PF08240">
    <property type="entry name" value="ADH_N"/>
    <property type="match status" value="1"/>
</dbReference>
<dbReference type="Pfam" id="PF13602">
    <property type="entry name" value="ADH_zinc_N_2"/>
    <property type="match status" value="1"/>
</dbReference>
<dbReference type="SUPFAM" id="SSF50129">
    <property type="entry name" value="GroES-like"/>
    <property type="match status" value="1"/>
</dbReference>
<dbReference type="SUPFAM" id="SSF51735">
    <property type="entry name" value="NAD(P)-binding Rossmann-fold domains"/>
    <property type="match status" value="1"/>
</dbReference>
<sequence>MPDEIVTNKSVTYVNNTTPVTITSSELDLRSCYQDDEVVIEVHAAALNPIDFITHQLCNSYIFGKYPKTYSRDYSGVIIKAGKDVDNRWKVGDKVNGMYSHIYGERGTLTHYLILNPAKDVPITHMVEVPKDENDPYDDFVYAAAWPLTFGTAFSTLYDFKKDWTSDSKVLVIGASTSVSYAFVHIAKNYFNIGTVVGICSKNSIERNKKLGYDYLVPYDEGSIVENVKKLKQSVLENDKFDMIFDSVGNHDFFPVIDQFLKPKAKNSFYVTIAGNNKADYKNISWRDFVSLSSILKAINPFKKYNWRFGHPYPPNNFIEVGNEMIKKGTYKPPIDSVYEFDQYKEAIDRLISNRAKGKVVVKMK</sequence>
<proteinExistence type="inferred from homology"/>
<feature type="chain" id="PRO_0000409683" description="Protein YIM1">
    <location>
        <begin position="1"/>
        <end position="365"/>
    </location>
</feature>